<reference key="1">
    <citation type="journal article" date="2006" name="Genes Genet. Syst.">
        <title>Complete nucleotide sequence of the cotton (Gossypium barbadense L.) chloroplast genome with a comparative analysis of sequences among 9 dicot plants.</title>
        <authorList>
            <person name="Ibrahim R.I.H."/>
            <person name="Azuma J."/>
            <person name="Sakamoto M."/>
        </authorList>
    </citation>
    <scope>NUCLEOTIDE SEQUENCE [LARGE SCALE GENOMIC DNA]</scope>
</reference>
<gene>
    <name evidence="1" type="primary">psbF</name>
</gene>
<sequence>MTIDRTYPIFTVRWLAVHGLAVPTVSFLGSISAMQFIQR</sequence>
<keyword id="KW-0150">Chloroplast</keyword>
<keyword id="KW-0249">Electron transport</keyword>
<keyword id="KW-0349">Heme</keyword>
<keyword id="KW-0408">Iron</keyword>
<keyword id="KW-0472">Membrane</keyword>
<keyword id="KW-0479">Metal-binding</keyword>
<keyword id="KW-0602">Photosynthesis</keyword>
<keyword id="KW-0604">Photosystem II</keyword>
<keyword id="KW-0934">Plastid</keyword>
<keyword id="KW-0793">Thylakoid</keyword>
<keyword id="KW-0812">Transmembrane</keyword>
<keyword id="KW-1133">Transmembrane helix</keyword>
<keyword id="KW-0813">Transport</keyword>
<evidence type="ECO:0000255" key="1">
    <source>
        <dbReference type="HAMAP-Rule" id="MF_00643"/>
    </source>
</evidence>
<name>PSBF_GOSBA</name>
<protein>
    <recommendedName>
        <fullName evidence="1">Cytochrome b559 subunit beta</fullName>
    </recommendedName>
    <alternativeName>
        <fullName evidence="1">PSII reaction center subunit VI</fullName>
    </alternativeName>
</protein>
<organism>
    <name type="scientific">Gossypium barbadense</name>
    <name type="common">Sea Island cotton</name>
    <name type="synonym">Hibiscus barbadensis</name>
    <dbReference type="NCBI Taxonomy" id="3634"/>
    <lineage>
        <taxon>Eukaryota</taxon>
        <taxon>Viridiplantae</taxon>
        <taxon>Streptophyta</taxon>
        <taxon>Embryophyta</taxon>
        <taxon>Tracheophyta</taxon>
        <taxon>Spermatophyta</taxon>
        <taxon>Magnoliopsida</taxon>
        <taxon>eudicotyledons</taxon>
        <taxon>Gunneridae</taxon>
        <taxon>Pentapetalae</taxon>
        <taxon>rosids</taxon>
        <taxon>malvids</taxon>
        <taxon>Malvales</taxon>
        <taxon>Malvaceae</taxon>
        <taxon>Malvoideae</taxon>
        <taxon>Gossypium</taxon>
    </lineage>
</organism>
<accession>A0ZZ51</accession>
<comment type="function">
    <text evidence="1">This b-type cytochrome is tightly associated with the reaction center of photosystem II (PSII). PSII is a light-driven water:plastoquinone oxidoreductase that uses light energy to abstract electrons from H(2)O, generating O(2) and a proton gradient subsequently used for ATP formation. It consists of a core antenna complex that captures photons, and an electron transfer chain that converts photonic excitation into a charge separation.</text>
</comment>
<comment type="cofactor">
    <cofactor evidence="1">
        <name>heme b</name>
        <dbReference type="ChEBI" id="CHEBI:60344"/>
    </cofactor>
    <text evidence="1">With its partner (PsbE) binds heme. PSII binds additional chlorophylls, carotenoids and specific lipids.</text>
</comment>
<comment type="subunit">
    <text evidence="1">Heterodimer of an alpha subunit and a beta subunit. PSII is composed of 1 copy each of membrane proteins PsbA, PsbB, PsbC, PsbD, PsbE, PsbF, PsbH, PsbI, PsbJ, PsbK, PsbL, PsbM, PsbT, PsbX, PsbY, PsbZ, Psb30/Ycf12, at least 3 peripheral proteins of the oxygen-evolving complex and a large number of cofactors. It forms dimeric complexes.</text>
</comment>
<comment type="subcellular location">
    <subcellularLocation>
        <location evidence="1">Plastid</location>
        <location evidence="1">Chloroplast thylakoid membrane</location>
        <topology evidence="1">Single-pass membrane protein</topology>
    </subcellularLocation>
</comment>
<comment type="similarity">
    <text evidence="1">Belongs to the PsbE/PsbF family.</text>
</comment>
<feature type="chain" id="PRO_0000275730" description="Cytochrome b559 subunit beta">
    <location>
        <begin position="1"/>
        <end position="39"/>
    </location>
</feature>
<feature type="transmembrane region" description="Helical" evidence="1">
    <location>
        <begin position="14"/>
        <end position="30"/>
    </location>
</feature>
<feature type="binding site" description="axial binding residue" evidence="1">
    <location>
        <position position="18"/>
    </location>
    <ligand>
        <name>heme</name>
        <dbReference type="ChEBI" id="CHEBI:30413"/>
        <note>ligand shared with alpha subunit</note>
    </ligand>
    <ligandPart>
        <name>Fe</name>
        <dbReference type="ChEBI" id="CHEBI:18248"/>
    </ligandPart>
</feature>
<geneLocation type="chloroplast"/>
<dbReference type="EMBL" id="AP009123">
    <property type="protein sequence ID" value="BAF41263.1"/>
    <property type="molecule type" value="Genomic_DNA"/>
</dbReference>
<dbReference type="RefSeq" id="YP_913203.1">
    <property type="nucleotide sequence ID" value="NC_008641.1"/>
</dbReference>
<dbReference type="SMR" id="A0ZZ51"/>
<dbReference type="GeneID" id="4575221"/>
<dbReference type="OrthoDB" id="933044at2759"/>
<dbReference type="GO" id="GO:0009535">
    <property type="term" value="C:chloroplast thylakoid membrane"/>
    <property type="evidence" value="ECO:0007669"/>
    <property type="project" value="UniProtKB-SubCell"/>
</dbReference>
<dbReference type="GO" id="GO:0009539">
    <property type="term" value="C:photosystem II reaction center"/>
    <property type="evidence" value="ECO:0007669"/>
    <property type="project" value="InterPro"/>
</dbReference>
<dbReference type="GO" id="GO:0009055">
    <property type="term" value="F:electron transfer activity"/>
    <property type="evidence" value="ECO:0007669"/>
    <property type="project" value="UniProtKB-UniRule"/>
</dbReference>
<dbReference type="GO" id="GO:0020037">
    <property type="term" value="F:heme binding"/>
    <property type="evidence" value="ECO:0007669"/>
    <property type="project" value="InterPro"/>
</dbReference>
<dbReference type="GO" id="GO:0005506">
    <property type="term" value="F:iron ion binding"/>
    <property type="evidence" value="ECO:0007669"/>
    <property type="project" value="UniProtKB-UniRule"/>
</dbReference>
<dbReference type="GO" id="GO:0009767">
    <property type="term" value="P:photosynthetic electron transport chain"/>
    <property type="evidence" value="ECO:0007669"/>
    <property type="project" value="InterPro"/>
</dbReference>
<dbReference type="HAMAP" id="MF_00643">
    <property type="entry name" value="PSII_PsbF"/>
    <property type="match status" value="1"/>
</dbReference>
<dbReference type="InterPro" id="IPR006241">
    <property type="entry name" value="PSII_cyt_b559_bsu"/>
</dbReference>
<dbReference type="InterPro" id="IPR006216">
    <property type="entry name" value="PSII_cyt_b559_CS"/>
</dbReference>
<dbReference type="InterPro" id="IPR013081">
    <property type="entry name" value="PSII_cyt_b559_N"/>
</dbReference>
<dbReference type="NCBIfam" id="TIGR01333">
    <property type="entry name" value="cyt_b559_beta"/>
    <property type="match status" value="1"/>
</dbReference>
<dbReference type="Pfam" id="PF00283">
    <property type="entry name" value="Cytochrom_B559"/>
    <property type="match status" value="1"/>
</dbReference>
<dbReference type="PIRSF" id="PIRSF000037">
    <property type="entry name" value="PsbF"/>
    <property type="match status" value="1"/>
</dbReference>
<dbReference type="SUPFAM" id="SSF161045">
    <property type="entry name" value="Cytochrome b559 subunits"/>
    <property type="match status" value="1"/>
</dbReference>
<dbReference type="PROSITE" id="PS00537">
    <property type="entry name" value="CYTOCHROME_B559"/>
    <property type="match status" value="1"/>
</dbReference>
<proteinExistence type="inferred from homology"/>